<protein>
    <recommendedName>
        <fullName evidence="1">NADH-quinone oxidoreductase subunit C/D</fullName>
        <ecNumber evidence="1">7.1.1.-</ecNumber>
    </recommendedName>
    <alternativeName>
        <fullName evidence="1">NADH dehydrogenase I subunit C/D</fullName>
    </alternativeName>
    <alternativeName>
        <fullName evidence="1">NDH-1 subunit C/D</fullName>
    </alternativeName>
</protein>
<evidence type="ECO:0000255" key="1">
    <source>
        <dbReference type="HAMAP-Rule" id="MF_01359"/>
    </source>
</evidence>
<reference key="1">
    <citation type="journal article" date="2005" name="J. Bacteriol.">
        <title>Whole-genome sequence analysis of Pseudomonas syringae pv. phaseolicola 1448A reveals divergence among pathovars in genes involved in virulence and transposition.</title>
        <authorList>
            <person name="Joardar V."/>
            <person name="Lindeberg M."/>
            <person name="Jackson R.W."/>
            <person name="Selengut J."/>
            <person name="Dodson R."/>
            <person name="Brinkac L.M."/>
            <person name="Daugherty S.C."/>
            <person name="DeBoy R.T."/>
            <person name="Durkin A.S."/>
            <person name="Gwinn Giglio M."/>
            <person name="Madupu R."/>
            <person name="Nelson W.C."/>
            <person name="Rosovitz M.J."/>
            <person name="Sullivan S.A."/>
            <person name="Crabtree J."/>
            <person name="Creasy T."/>
            <person name="Davidsen T.M."/>
            <person name="Haft D.H."/>
            <person name="Zafar N."/>
            <person name="Zhou L."/>
            <person name="Halpin R."/>
            <person name="Holley T."/>
            <person name="Khouri H.M."/>
            <person name="Feldblyum T.V."/>
            <person name="White O."/>
            <person name="Fraser C.M."/>
            <person name="Chatterjee A.K."/>
            <person name="Cartinhour S."/>
            <person name="Schneider D."/>
            <person name="Mansfield J.W."/>
            <person name="Collmer A."/>
            <person name="Buell R."/>
        </authorList>
    </citation>
    <scope>NUCLEOTIDE SEQUENCE [LARGE SCALE GENOMIC DNA]</scope>
    <source>
        <strain>1448A / Race 6</strain>
    </source>
</reference>
<sequence length="593" mass="67690">MTADNALYIPPYKADDQDVVVELNTHFGAEAFTAQPTRTGMPVLWVERARLFEILTFLRNVPKPYSMLYDLHGVDERLRTNRRGLPGADFTVFYHLLSIERNSDVMIKVALSESDLSVPTITSIWPNANWYEREVWDMFGIDFPGHPHLSRIMMPPTWEGHPLRKDFPARATELDPYSLTLAKQQLEEEAARFRPEDWGMKRSGANEDYMFLNLGPNHPSAHGAFRIILQLDGEEIVDCVPDIGYHHRGAEKMAERQSWHSFIPYTDRIDYLGGVMNNLPYVLSVEKLAGIKVPEKVDVIRIMMAEFFRITSHLLFLGTYIQDVGAMTPVFFTFTDRQKAYTVIEAITGFRLHPAWYRIGGVAHDLPRGWEKLVKDFVDWLPKRLDEYTKAALQNSILKGRTVGVAAYNTKEALEWGVTGAGLRSTGCDFDLRKARPYSGYENFEFEVPLAANGDAYDRCMVRVEEMRQSIKIIDQCMRNMPEGPYKADHPLTTPPPKERTLQHIETLITHFLQVSWGPVMPANESFQMIEATKGINSYYLTSDGGTMSYRTRIRTPSYPHLQQIPSVIKGSMVADLIAYLGSIDFVMADVDR</sequence>
<organism>
    <name type="scientific">Pseudomonas savastanoi pv. phaseolicola (strain 1448A / Race 6)</name>
    <name type="common">Pseudomonas syringae pv. phaseolicola (strain 1448A / Race 6)</name>
    <dbReference type="NCBI Taxonomy" id="264730"/>
    <lineage>
        <taxon>Bacteria</taxon>
        <taxon>Pseudomonadati</taxon>
        <taxon>Pseudomonadota</taxon>
        <taxon>Gammaproteobacteria</taxon>
        <taxon>Pseudomonadales</taxon>
        <taxon>Pseudomonadaceae</taxon>
        <taxon>Pseudomonas</taxon>
    </lineage>
</organism>
<comment type="function">
    <text evidence="1">NDH-1 shuttles electrons from NADH, via FMN and iron-sulfur (Fe-S) centers, to quinones in the respiratory chain. The immediate electron acceptor for the enzyme in this species is believed to be ubiquinone. Couples the redox reaction to proton translocation (for every two electrons transferred, four hydrogen ions are translocated across the cytoplasmic membrane), and thus conserves the redox energy in a proton gradient.</text>
</comment>
<comment type="catalytic activity">
    <reaction evidence="1">
        <text>a quinone + NADH + 5 H(+)(in) = a quinol + NAD(+) + 4 H(+)(out)</text>
        <dbReference type="Rhea" id="RHEA:57888"/>
        <dbReference type="ChEBI" id="CHEBI:15378"/>
        <dbReference type="ChEBI" id="CHEBI:24646"/>
        <dbReference type="ChEBI" id="CHEBI:57540"/>
        <dbReference type="ChEBI" id="CHEBI:57945"/>
        <dbReference type="ChEBI" id="CHEBI:132124"/>
    </reaction>
</comment>
<comment type="subunit">
    <text evidence="1">NDH-1 is composed of 13 different subunits. Subunits NuoB, CD, E, F, and G constitute the peripheral sector of the complex.</text>
</comment>
<comment type="subcellular location">
    <subcellularLocation>
        <location evidence="1">Cell inner membrane</location>
        <topology evidence="1">Peripheral membrane protein</topology>
        <orientation evidence="1">Cytoplasmic side</orientation>
    </subcellularLocation>
</comment>
<comment type="similarity">
    <text evidence="1">In the N-terminal section; belongs to the complex I 30 kDa subunit family.</text>
</comment>
<comment type="similarity">
    <text evidence="1">In the C-terminal section; belongs to the complex I 49 kDa subunit family.</text>
</comment>
<name>NUOCD_PSE14</name>
<keyword id="KW-0997">Cell inner membrane</keyword>
<keyword id="KW-1003">Cell membrane</keyword>
<keyword id="KW-0472">Membrane</keyword>
<keyword id="KW-0511">Multifunctional enzyme</keyword>
<keyword id="KW-0520">NAD</keyword>
<keyword id="KW-0874">Quinone</keyword>
<keyword id="KW-1278">Translocase</keyword>
<keyword id="KW-0813">Transport</keyword>
<keyword id="KW-0830">Ubiquinone</keyword>
<dbReference type="EC" id="7.1.1.-" evidence="1"/>
<dbReference type="EMBL" id="CP000058">
    <property type="protein sequence ID" value="AAZ35646.1"/>
    <property type="molecule type" value="Genomic_DNA"/>
</dbReference>
<dbReference type="RefSeq" id="WP_011168966.1">
    <property type="nucleotide sequence ID" value="NC_005773.3"/>
</dbReference>
<dbReference type="SMR" id="Q48H52"/>
<dbReference type="KEGG" id="psp:PSPPH_3111"/>
<dbReference type="eggNOG" id="COG0649">
    <property type="taxonomic scope" value="Bacteria"/>
</dbReference>
<dbReference type="eggNOG" id="COG0852">
    <property type="taxonomic scope" value="Bacteria"/>
</dbReference>
<dbReference type="HOGENOM" id="CLU_015134_3_2_6"/>
<dbReference type="Proteomes" id="UP000000551">
    <property type="component" value="Chromosome"/>
</dbReference>
<dbReference type="GO" id="GO:0030964">
    <property type="term" value="C:NADH dehydrogenase complex"/>
    <property type="evidence" value="ECO:0007669"/>
    <property type="project" value="InterPro"/>
</dbReference>
<dbReference type="GO" id="GO:0005886">
    <property type="term" value="C:plasma membrane"/>
    <property type="evidence" value="ECO:0007669"/>
    <property type="project" value="UniProtKB-SubCell"/>
</dbReference>
<dbReference type="GO" id="GO:0051287">
    <property type="term" value="F:NAD binding"/>
    <property type="evidence" value="ECO:0007669"/>
    <property type="project" value="InterPro"/>
</dbReference>
<dbReference type="GO" id="GO:0008137">
    <property type="term" value="F:NADH dehydrogenase (ubiquinone) activity"/>
    <property type="evidence" value="ECO:0007669"/>
    <property type="project" value="InterPro"/>
</dbReference>
<dbReference type="GO" id="GO:0050136">
    <property type="term" value="F:NADH:ubiquinone reductase (non-electrogenic) activity"/>
    <property type="evidence" value="ECO:0007669"/>
    <property type="project" value="UniProtKB-UniRule"/>
</dbReference>
<dbReference type="GO" id="GO:0048038">
    <property type="term" value="F:quinone binding"/>
    <property type="evidence" value="ECO:0007669"/>
    <property type="project" value="UniProtKB-KW"/>
</dbReference>
<dbReference type="FunFam" id="1.10.645.10:FF:000001">
    <property type="entry name" value="NADH-quinone oxidoreductase subunit C/D"/>
    <property type="match status" value="1"/>
</dbReference>
<dbReference type="FunFam" id="3.30.460.80:FF:000001">
    <property type="entry name" value="NADH-quinone oxidoreductase subunit C/D"/>
    <property type="match status" value="1"/>
</dbReference>
<dbReference type="Gene3D" id="1.10.645.10">
    <property type="entry name" value="Cytochrome-c3 Hydrogenase, chain B"/>
    <property type="match status" value="1"/>
</dbReference>
<dbReference type="Gene3D" id="3.30.460.80">
    <property type="entry name" value="NADH:ubiquinone oxidoreductase, 30kDa subunit"/>
    <property type="match status" value="1"/>
</dbReference>
<dbReference type="HAMAP" id="MF_01357">
    <property type="entry name" value="NDH1_NuoC"/>
    <property type="match status" value="1"/>
</dbReference>
<dbReference type="HAMAP" id="MF_01359">
    <property type="entry name" value="NDH1_NuoCD_1"/>
    <property type="match status" value="1"/>
</dbReference>
<dbReference type="HAMAP" id="MF_01358">
    <property type="entry name" value="NDH1_NuoD"/>
    <property type="match status" value="1"/>
</dbReference>
<dbReference type="InterPro" id="IPR010218">
    <property type="entry name" value="NADH_DH_suC"/>
</dbReference>
<dbReference type="InterPro" id="IPR023062">
    <property type="entry name" value="NADH_DH_suCD"/>
</dbReference>
<dbReference type="InterPro" id="IPR001135">
    <property type="entry name" value="NADH_Q_OxRdtase_suD"/>
</dbReference>
<dbReference type="InterPro" id="IPR037232">
    <property type="entry name" value="NADH_quin_OxRdtase_su_C/D-like"/>
</dbReference>
<dbReference type="InterPro" id="IPR001268">
    <property type="entry name" value="NADH_UbQ_OxRdtase_30kDa_su"/>
</dbReference>
<dbReference type="InterPro" id="IPR014029">
    <property type="entry name" value="NADH_UbQ_OxRdtase_49kDa_CS"/>
</dbReference>
<dbReference type="InterPro" id="IPR022885">
    <property type="entry name" value="NDH1_su_D/H"/>
</dbReference>
<dbReference type="InterPro" id="IPR029014">
    <property type="entry name" value="NiFe-Hase_large"/>
</dbReference>
<dbReference type="NCBIfam" id="TIGR01961">
    <property type="entry name" value="NuoC_fam"/>
    <property type="match status" value="1"/>
</dbReference>
<dbReference type="NCBIfam" id="TIGR01962">
    <property type="entry name" value="NuoD"/>
    <property type="match status" value="1"/>
</dbReference>
<dbReference type="NCBIfam" id="NF004739">
    <property type="entry name" value="PRK06075.1"/>
    <property type="match status" value="1"/>
</dbReference>
<dbReference type="NCBIfam" id="NF008728">
    <property type="entry name" value="PRK11742.1"/>
    <property type="match status" value="1"/>
</dbReference>
<dbReference type="PANTHER" id="PTHR11993:SF45">
    <property type="entry name" value="NADH-QUINONE OXIDOREDUCTASE SUBUNIT C_D"/>
    <property type="match status" value="1"/>
</dbReference>
<dbReference type="PANTHER" id="PTHR11993">
    <property type="entry name" value="NADH-UBIQUINONE OXIDOREDUCTASE 49 KDA SUBUNIT"/>
    <property type="match status" value="1"/>
</dbReference>
<dbReference type="Pfam" id="PF00329">
    <property type="entry name" value="Complex1_30kDa"/>
    <property type="match status" value="1"/>
</dbReference>
<dbReference type="Pfam" id="PF00346">
    <property type="entry name" value="Complex1_49kDa"/>
    <property type="match status" value="1"/>
</dbReference>
<dbReference type="SUPFAM" id="SSF56762">
    <property type="entry name" value="HydB/Nqo4-like"/>
    <property type="match status" value="1"/>
</dbReference>
<dbReference type="SUPFAM" id="SSF143243">
    <property type="entry name" value="Nqo5-like"/>
    <property type="match status" value="1"/>
</dbReference>
<dbReference type="PROSITE" id="PS00535">
    <property type="entry name" value="COMPLEX1_49K"/>
    <property type="match status" value="1"/>
</dbReference>
<gene>
    <name evidence="1" type="primary">nuoC</name>
    <name evidence="1" type="synonym">nuoCD</name>
    <name evidence="1" type="synonym">nuoD</name>
    <name type="ordered locus">PSPPH_3111</name>
</gene>
<proteinExistence type="inferred from homology"/>
<accession>Q48H52</accession>
<feature type="chain" id="PRO_0000358665" description="NADH-quinone oxidoreductase subunit C/D">
    <location>
        <begin position="1"/>
        <end position="593"/>
    </location>
</feature>
<feature type="region of interest" description="NADH dehydrogenase I subunit C" evidence="1">
    <location>
        <begin position="1"/>
        <end position="184"/>
    </location>
</feature>
<feature type="region of interest" description="NADH dehydrogenase I subunit D" evidence="1">
    <location>
        <begin position="208"/>
        <end position="593"/>
    </location>
</feature>